<name>MRS2_GIBZE</name>
<gene>
    <name type="primary">MRS2</name>
    <name type="ORF">FGRRES_16995</name>
    <name type="ORF">FGSG_08660</name>
</gene>
<dbReference type="EMBL" id="DS231667">
    <property type="protein sequence ID" value="ESU14657.1"/>
    <property type="status" value="ALT_SEQ"/>
    <property type="molecule type" value="Genomic_DNA"/>
</dbReference>
<dbReference type="EMBL" id="HG970333">
    <property type="protein sequence ID" value="CEF77054.1"/>
    <property type="molecule type" value="Genomic_DNA"/>
</dbReference>
<dbReference type="RefSeq" id="XP_011320082.1">
    <property type="nucleotide sequence ID" value="XM_011321780.1"/>
</dbReference>
<dbReference type="SMR" id="Q4I298"/>
<dbReference type="FunCoup" id="Q4I298">
    <property type="interactions" value="333"/>
</dbReference>
<dbReference type="STRING" id="229533.Q4I298"/>
<dbReference type="GeneID" id="23555654"/>
<dbReference type="KEGG" id="fgr:FGSG_08660"/>
<dbReference type="VEuPathDB" id="FungiDB:FGRAMPH1_01G10503"/>
<dbReference type="eggNOG" id="KOG2662">
    <property type="taxonomic scope" value="Eukaryota"/>
</dbReference>
<dbReference type="HOGENOM" id="CLU_025144_2_0_1"/>
<dbReference type="InParanoid" id="Q4I298"/>
<dbReference type="OrthoDB" id="88025at110618"/>
<dbReference type="Proteomes" id="UP000070720">
    <property type="component" value="Chromosome 2"/>
</dbReference>
<dbReference type="GO" id="GO:0005743">
    <property type="term" value="C:mitochondrial inner membrane"/>
    <property type="evidence" value="ECO:0000250"/>
    <property type="project" value="UniProtKB"/>
</dbReference>
<dbReference type="GO" id="GO:0015095">
    <property type="term" value="F:magnesium ion transmembrane transporter activity"/>
    <property type="evidence" value="ECO:0000250"/>
    <property type="project" value="UniProtKB"/>
</dbReference>
<dbReference type="GO" id="GO:0045016">
    <property type="term" value="P:mitochondrial magnesium ion transmembrane transport"/>
    <property type="evidence" value="ECO:0000250"/>
    <property type="project" value="UniProtKB"/>
</dbReference>
<dbReference type="CDD" id="cd12823">
    <property type="entry name" value="Mrs2_Mfm1p-like"/>
    <property type="match status" value="1"/>
</dbReference>
<dbReference type="FunFam" id="1.20.58.340:FF:000005">
    <property type="entry name" value="Inner membrane magnesium transporter MRS2"/>
    <property type="match status" value="1"/>
</dbReference>
<dbReference type="FunFam" id="2.40.128.330:FF:000002">
    <property type="entry name" value="Inner membrane magnesium transporter mrs2"/>
    <property type="match status" value="1"/>
</dbReference>
<dbReference type="Gene3D" id="2.40.128.330">
    <property type="match status" value="1"/>
</dbReference>
<dbReference type="Gene3D" id="1.20.58.340">
    <property type="entry name" value="Magnesium transport protein CorA, transmembrane region"/>
    <property type="match status" value="2"/>
</dbReference>
<dbReference type="InterPro" id="IPR045863">
    <property type="entry name" value="CorA_TM1_TM2"/>
</dbReference>
<dbReference type="InterPro" id="IPR039204">
    <property type="entry name" value="MRS2-like"/>
</dbReference>
<dbReference type="PANTHER" id="PTHR13890:SF0">
    <property type="entry name" value="MAGNESIUM TRANSPORTER MRS2 HOMOLOG, MITOCHONDRIAL"/>
    <property type="match status" value="1"/>
</dbReference>
<dbReference type="PANTHER" id="PTHR13890">
    <property type="entry name" value="RNA SPLICING PROTEIN MRS2, MITOCHONDRIAL"/>
    <property type="match status" value="1"/>
</dbReference>
<dbReference type="Pfam" id="PF22099">
    <property type="entry name" value="MRS2-like"/>
    <property type="match status" value="1"/>
</dbReference>
<dbReference type="SUPFAM" id="SSF144083">
    <property type="entry name" value="Magnesium transport protein CorA, transmembrane region"/>
    <property type="match status" value="1"/>
</dbReference>
<comment type="function">
    <text evidence="1">High-conductance magnesium-selective channel that mediates the influx of magnesium into the mitochondrial matrix. Essential for the splicing of mRNA group II introns in mitochondria by affecting mitochondrial magnesium concentrations, which are critical for group II intron splicing. It also suppresses a variety of mitochondrial intron mutations and its absence may disturb the assembly of mitochondrial membrane complexes.</text>
</comment>
<comment type="subunit">
    <text evidence="1">Homopentamer. Forms homooligomers. Interacts with MFM1.</text>
</comment>
<comment type="subcellular location">
    <subcellularLocation>
        <location evidence="1">Mitochondrion inner membrane</location>
        <topology evidence="1">Multi-pass membrane protein</topology>
    </subcellularLocation>
</comment>
<comment type="similarity">
    <text evidence="4">Belongs to the CorA metal ion transporter (MIT) (TC 1.A.35) family.</text>
</comment>
<comment type="sequence caution" evidence="4">
    <conflict type="erroneous gene model prediction">
        <sequence resource="EMBL-CDS" id="ESU14657"/>
    </conflict>
</comment>
<feature type="transit peptide" description="Mitochondrion" evidence="2">
    <location>
        <begin position="1"/>
        <end position="26"/>
    </location>
</feature>
<feature type="chain" id="PRO_0000043245" description="Mitochondrial inner membrane magnesium transporter MRS2">
    <location>
        <begin position="27"/>
        <end position="537"/>
    </location>
</feature>
<feature type="transmembrane region" description="Helical" evidence="2">
    <location>
        <begin position="425"/>
        <end position="445"/>
    </location>
</feature>
<feature type="transmembrane region" description="Helical" evidence="2">
    <location>
        <begin position="456"/>
        <end position="476"/>
    </location>
</feature>
<feature type="region of interest" description="Disordered" evidence="3">
    <location>
        <begin position="79"/>
        <end position="112"/>
    </location>
</feature>
<feature type="short sequence motif" description="YGMN">
    <location>
        <begin position="442"/>
        <end position="445"/>
    </location>
</feature>
<feature type="compositionally biased region" description="Polar residues" evidence="3">
    <location>
        <begin position="90"/>
        <end position="112"/>
    </location>
</feature>
<sequence>MQSTLCLPVPSRSLLRFLRCQSKRAFASANHGRDTITTSAIRCRARSLNTVAIRKQSLALTTACERRVTTVEPSLFDKDPVTRKLPDRNQPLTSQNHFSTSRNAQGFWSGRKSSSSYMPTWNSFLKFAGKKNEKALKPDDLPNHDEFGDNSSIFNNRRTLAAKAASEPRLRCTEVDEHGNVILVDGEFKKTELIAKFGLLPRDLRKIDSSNLPHILIRPSAILLNLLHLKVLIKHDRVLLFDIYGSKTSYPQSAFMYDLQGKLQQKTAPGNASLPYEFRALEAVLTSVTSELEADFEAVREPVMHILSELEDDIDRHKLRMLLILSKRVSTFEQKAKLVRDAIEDLLEADDDLADMYLTEKTHDLYRGEDDHTEVEMLLESYHKLTDEIVQEAGNLVSGIRNTEEIVRAILDANRNALMLLDLKFSVGTLGLAMGTFLAGLYGMNLENFIEETNWGFAGVTGVSVVFSLIVCWYGLTKLRRVQRIKMMDAERPAIARGQSYFPDDRSALGLLDNRNREMLRRINMQKAVSQQKKKWL</sequence>
<evidence type="ECO:0000250" key="1">
    <source>
        <dbReference type="UniProtKB" id="Q01926"/>
    </source>
</evidence>
<evidence type="ECO:0000255" key="2"/>
<evidence type="ECO:0000256" key="3">
    <source>
        <dbReference type="SAM" id="MobiDB-lite"/>
    </source>
</evidence>
<evidence type="ECO:0000305" key="4"/>
<proteinExistence type="inferred from homology"/>
<reference key="1">
    <citation type="journal article" date="2007" name="Science">
        <title>The Fusarium graminearum genome reveals a link between localized polymorphism and pathogen specialization.</title>
        <authorList>
            <person name="Cuomo C.A."/>
            <person name="Gueldener U."/>
            <person name="Xu J.-R."/>
            <person name="Trail F."/>
            <person name="Turgeon B.G."/>
            <person name="Di Pietro A."/>
            <person name="Walton J.D."/>
            <person name="Ma L.-J."/>
            <person name="Baker S.E."/>
            <person name="Rep M."/>
            <person name="Adam G."/>
            <person name="Antoniw J."/>
            <person name="Baldwin T."/>
            <person name="Calvo S.E."/>
            <person name="Chang Y.-L."/>
            <person name="DeCaprio D."/>
            <person name="Gale L.R."/>
            <person name="Gnerre S."/>
            <person name="Goswami R.S."/>
            <person name="Hammond-Kosack K."/>
            <person name="Harris L.J."/>
            <person name="Hilburn K."/>
            <person name="Kennell J.C."/>
            <person name="Kroken S."/>
            <person name="Magnuson J.K."/>
            <person name="Mannhaupt G."/>
            <person name="Mauceli E.W."/>
            <person name="Mewes H.-W."/>
            <person name="Mitterbauer R."/>
            <person name="Muehlbauer G."/>
            <person name="Muensterkoetter M."/>
            <person name="Nelson D."/>
            <person name="O'Donnell K."/>
            <person name="Ouellet T."/>
            <person name="Qi W."/>
            <person name="Quesneville H."/>
            <person name="Roncero M.I.G."/>
            <person name="Seong K.-Y."/>
            <person name="Tetko I.V."/>
            <person name="Urban M."/>
            <person name="Waalwijk C."/>
            <person name="Ward T.J."/>
            <person name="Yao J."/>
            <person name="Birren B.W."/>
            <person name="Kistler H.C."/>
        </authorList>
    </citation>
    <scope>NUCLEOTIDE SEQUENCE [LARGE SCALE GENOMIC DNA]</scope>
    <source>
        <strain>ATCC MYA-4620 / CBS 123657 / FGSC 9075 / NRRL 31084 / PH-1</strain>
    </source>
</reference>
<reference key="2">
    <citation type="journal article" date="2010" name="Nature">
        <title>Comparative genomics reveals mobile pathogenicity chromosomes in Fusarium.</title>
        <authorList>
            <person name="Ma L.-J."/>
            <person name="van der Does H.C."/>
            <person name="Borkovich K.A."/>
            <person name="Coleman J.J."/>
            <person name="Daboussi M.-J."/>
            <person name="Di Pietro A."/>
            <person name="Dufresne M."/>
            <person name="Freitag M."/>
            <person name="Grabherr M."/>
            <person name="Henrissat B."/>
            <person name="Houterman P.M."/>
            <person name="Kang S."/>
            <person name="Shim W.-B."/>
            <person name="Woloshuk C."/>
            <person name="Xie X."/>
            <person name="Xu J.-R."/>
            <person name="Antoniw J."/>
            <person name="Baker S.E."/>
            <person name="Bluhm B.H."/>
            <person name="Breakspear A."/>
            <person name="Brown D.W."/>
            <person name="Butchko R.A.E."/>
            <person name="Chapman S."/>
            <person name="Coulson R."/>
            <person name="Coutinho P.M."/>
            <person name="Danchin E.G.J."/>
            <person name="Diener A."/>
            <person name="Gale L.R."/>
            <person name="Gardiner D.M."/>
            <person name="Goff S."/>
            <person name="Hammond-Kosack K.E."/>
            <person name="Hilburn K."/>
            <person name="Hua-Van A."/>
            <person name="Jonkers W."/>
            <person name="Kazan K."/>
            <person name="Kodira C.D."/>
            <person name="Koehrsen M."/>
            <person name="Kumar L."/>
            <person name="Lee Y.-H."/>
            <person name="Li L."/>
            <person name="Manners J.M."/>
            <person name="Miranda-Saavedra D."/>
            <person name="Mukherjee M."/>
            <person name="Park G."/>
            <person name="Park J."/>
            <person name="Park S.-Y."/>
            <person name="Proctor R.H."/>
            <person name="Regev A."/>
            <person name="Ruiz-Roldan M.C."/>
            <person name="Sain D."/>
            <person name="Sakthikumar S."/>
            <person name="Sykes S."/>
            <person name="Schwartz D.C."/>
            <person name="Turgeon B.G."/>
            <person name="Wapinski I."/>
            <person name="Yoder O."/>
            <person name="Young S."/>
            <person name="Zeng Q."/>
            <person name="Zhou S."/>
            <person name="Galagan J."/>
            <person name="Cuomo C.A."/>
            <person name="Kistler H.C."/>
            <person name="Rep M."/>
        </authorList>
    </citation>
    <scope>GENOME REANNOTATION</scope>
    <source>
        <strain>ATCC MYA-4620 / CBS 123657 / FGSC 9075 / NRRL 31084 / PH-1</strain>
    </source>
</reference>
<reference key="3">
    <citation type="journal article" date="2015" name="BMC Genomics">
        <title>The completed genome sequence of the pathogenic ascomycete fungus Fusarium graminearum.</title>
        <authorList>
            <person name="King R."/>
            <person name="Urban M."/>
            <person name="Hammond-Kosack M.C.U."/>
            <person name="Hassani-Pak K."/>
            <person name="Hammond-Kosack K.E."/>
        </authorList>
    </citation>
    <scope>NUCLEOTIDE SEQUENCE [LARGE SCALE GENOMIC DNA]</scope>
    <source>
        <strain>ATCC MYA-4620 / CBS 123657 / FGSC 9075 / NRRL 31084 / PH-1</strain>
    </source>
</reference>
<organism>
    <name type="scientific">Gibberella zeae (strain ATCC MYA-4620 / CBS 123657 / FGSC 9075 / NRRL 31084 / PH-1)</name>
    <name type="common">Wheat head blight fungus</name>
    <name type="synonym">Fusarium graminearum</name>
    <dbReference type="NCBI Taxonomy" id="229533"/>
    <lineage>
        <taxon>Eukaryota</taxon>
        <taxon>Fungi</taxon>
        <taxon>Dikarya</taxon>
        <taxon>Ascomycota</taxon>
        <taxon>Pezizomycotina</taxon>
        <taxon>Sordariomycetes</taxon>
        <taxon>Hypocreomycetidae</taxon>
        <taxon>Hypocreales</taxon>
        <taxon>Nectriaceae</taxon>
        <taxon>Fusarium</taxon>
    </lineage>
</organism>
<protein>
    <recommendedName>
        <fullName>Mitochondrial inner membrane magnesium transporter MRS2</fullName>
    </recommendedName>
    <alternativeName>
        <fullName>RNA-splicing protein MRS2</fullName>
    </alternativeName>
</protein>
<accession>Q4I298</accession>
<accession>A0A0E0S0M9</accession>
<accession>V6RL29</accession>
<keyword id="KW-0406">Ion transport</keyword>
<keyword id="KW-0460">Magnesium</keyword>
<keyword id="KW-0472">Membrane</keyword>
<keyword id="KW-0496">Mitochondrion</keyword>
<keyword id="KW-0999">Mitochondrion inner membrane</keyword>
<keyword id="KW-1185">Reference proteome</keyword>
<keyword id="KW-0809">Transit peptide</keyword>
<keyword id="KW-0812">Transmembrane</keyword>
<keyword id="KW-1133">Transmembrane helix</keyword>
<keyword id="KW-0813">Transport</keyword>